<keyword id="KW-0052">Apoplast</keyword>
<keyword id="KW-0186">Copper</keyword>
<keyword id="KW-0325">Glycoprotein</keyword>
<keyword id="KW-0439">Lignin degradation</keyword>
<keyword id="KW-0479">Metal-binding</keyword>
<keyword id="KW-0560">Oxidoreductase</keyword>
<keyword id="KW-1185">Reference proteome</keyword>
<keyword id="KW-0677">Repeat</keyword>
<keyword id="KW-0964">Secreted</keyword>
<keyword id="KW-0732">Signal</keyword>
<comment type="function">
    <text evidence="1">Lignin degradation and detoxification of lignin-derived products.</text>
</comment>
<comment type="catalytic activity">
    <reaction>
        <text>4 hydroquinone + O2 = 4 benzosemiquinone + 2 H2O</text>
        <dbReference type="Rhea" id="RHEA:11276"/>
        <dbReference type="ChEBI" id="CHEBI:15377"/>
        <dbReference type="ChEBI" id="CHEBI:15379"/>
        <dbReference type="ChEBI" id="CHEBI:17594"/>
        <dbReference type="ChEBI" id="CHEBI:17977"/>
        <dbReference type="EC" id="1.10.3.2"/>
    </reaction>
</comment>
<comment type="cofactor">
    <cofactor evidence="1">
        <name>Cu cation</name>
        <dbReference type="ChEBI" id="CHEBI:23378"/>
    </cofactor>
    <text evidence="1">Binds 4 Cu cations per monomer.</text>
</comment>
<comment type="subcellular location">
    <subcellularLocation>
        <location evidence="5">Secreted</location>
        <location evidence="5">Extracellular space</location>
        <location evidence="5">Apoplast</location>
    </subcellularLocation>
</comment>
<comment type="tissue specificity">
    <text evidence="3 4">Ubiquitous with higher levels in the inflorescence stem.</text>
</comment>
<comment type="similarity">
    <text evidence="5">Belongs to the multicopper oxidase family.</text>
</comment>
<dbReference type="EC" id="1.10.3.2"/>
<dbReference type="EMBL" id="AB015475">
    <property type="protein sequence ID" value="BAB08370.1"/>
    <property type="molecule type" value="Genomic_DNA"/>
</dbReference>
<dbReference type="EMBL" id="CP002688">
    <property type="protein sequence ID" value="AED97267.1"/>
    <property type="molecule type" value="Genomic_DNA"/>
</dbReference>
<dbReference type="EMBL" id="BT015359">
    <property type="protein sequence ID" value="AAU05482.1"/>
    <property type="molecule type" value="mRNA"/>
</dbReference>
<dbReference type="EMBL" id="BT015890">
    <property type="protein sequence ID" value="AAU95426.1"/>
    <property type="molecule type" value="mRNA"/>
</dbReference>
<dbReference type="RefSeq" id="NP_200810.1">
    <property type="nucleotide sequence ID" value="NM_125395.3"/>
</dbReference>
<dbReference type="SMR" id="Q9FJD5"/>
<dbReference type="FunCoup" id="Q9FJD5">
    <property type="interactions" value="57"/>
</dbReference>
<dbReference type="STRING" id="3702.Q9FJD5"/>
<dbReference type="GlyCosmos" id="Q9FJD5">
    <property type="glycosylation" value="15 sites, No reported glycans"/>
</dbReference>
<dbReference type="GlyGen" id="Q9FJD5">
    <property type="glycosylation" value="15 sites"/>
</dbReference>
<dbReference type="PaxDb" id="3702-AT5G60020.1"/>
<dbReference type="ProteomicsDB" id="237039"/>
<dbReference type="EnsemblPlants" id="AT5G60020.1">
    <property type="protein sequence ID" value="AT5G60020.1"/>
    <property type="gene ID" value="AT5G60020"/>
</dbReference>
<dbReference type="GeneID" id="836124"/>
<dbReference type="Gramene" id="AT5G60020.1">
    <property type="protein sequence ID" value="AT5G60020.1"/>
    <property type="gene ID" value="AT5G60020"/>
</dbReference>
<dbReference type="KEGG" id="ath:AT5G60020"/>
<dbReference type="Araport" id="AT5G60020"/>
<dbReference type="TAIR" id="AT5G60020">
    <property type="gene designation" value="LAC17"/>
</dbReference>
<dbReference type="eggNOG" id="KOG1263">
    <property type="taxonomic scope" value="Eukaryota"/>
</dbReference>
<dbReference type="HOGENOM" id="CLU_006504_6_3_1"/>
<dbReference type="InParanoid" id="Q9FJD5"/>
<dbReference type="OrthoDB" id="2121828at2759"/>
<dbReference type="PhylomeDB" id="Q9FJD5"/>
<dbReference type="BioCyc" id="ARA:AT5G60020-MONOMER"/>
<dbReference type="BioCyc" id="MetaCyc:AT5G60020-MONOMER"/>
<dbReference type="PRO" id="PR:Q9FJD5"/>
<dbReference type="Proteomes" id="UP000006548">
    <property type="component" value="Chromosome 5"/>
</dbReference>
<dbReference type="ExpressionAtlas" id="Q9FJD5">
    <property type="expression patterns" value="baseline and differential"/>
</dbReference>
<dbReference type="GO" id="GO:0048046">
    <property type="term" value="C:apoplast"/>
    <property type="evidence" value="ECO:0007669"/>
    <property type="project" value="UniProtKB-SubCell"/>
</dbReference>
<dbReference type="GO" id="GO:0009505">
    <property type="term" value="C:plant-type cell wall"/>
    <property type="evidence" value="ECO:0000314"/>
    <property type="project" value="TAIR"/>
</dbReference>
<dbReference type="GO" id="GO:0005507">
    <property type="term" value="F:copper ion binding"/>
    <property type="evidence" value="ECO:0007669"/>
    <property type="project" value="InterPro"/>
</dbReference>
<dbReference type="GO" id="GO:0052716">
    <property type="term" value="F:hydroquinone:oxygen oxidoreductase activity"/>
    <property type="evidence" value="ECO:0007669"/>
    <property type="project" value="UniProtKB-EC"/>
</dbReference>
<dbReference type="GO" id="GO:0016491">
    <property type="term" value="F:oxidoreductase activity"/>
    <property type="evidence" value="ECO:0000315"/>
    <property type="project" value="TAIR"/>
</dbReference>
<dbReference type="GO" id="GO:0009809">
    <property type="term" value="P:lignin biosynthetic process"/>
    <property type="evidence" value="ECO:0000315"/>
    <property type="project" value="TAIR"/>
</dbReference>
<dbReference type="GO" id="GO:0046274">
    <property type="term" value="P:lignin catabolic process"/>
    <property type="evidence" value="ECO:0007669"/>
    <property type="project" value="UniProtKB-KW"/>
</dbReference>
<dbReference type="GO" id="GO:0009698">
    <property type="term" value="P:phenylpropanoid metabolic process"/>
    <property type="evidence" value="ECO:0000315"/>
    <property type="project" value="TAIR"/>
</dbReference>
<dbReference type="CDD" id="cd13849">
    <property type="entry name" value="CuRO_1_LCC_plant"/>
    <property type="match status" value="1"/>
</dbReference>
<dbReference type="CDD" id="cd13875">
    <property type="entry name" value="CuRO_2_LCC_plant"/>
    <property type="match status" value="1"/>
</dbReference>
<dbReference type="CDD" id="cd13897">
    <property type="entry name" value="CuRO_3_LCC_plant"/>
    <property type="match status" value="1"/>
</dbReference>
<dbReference type="FunFam" id="2.60.40.420:FF:000049">
    <property type="entry name" value="Laccase"/>
    <property type="match status" value="1"/>
</dbReference>
<dbReference type="FunFam" id="2.60.40.420:FF:000053">
    <property type="entry name" value="Laccase"/>
    <property type="match status" value="1"/>
</dbReference>
<dbReference type="FunFam" id="2.60.40.420:FF:000062">
    <property type="entry name" value="Laccase"/>
    <property type="match status" value="1"/>
</dbReference>
<dbReference type="Gene3D" id="2.60.40.420">
    <property type="entry name" value="Cupredoxins - blue copper proteins"/>
    <property type="match status" value="3"/>
</dbReference>
<dbReference type="InterPro" id="IPR011707">
    <property type="entry name" value="Cu-oxidase-like_N"/>
</dbReference>
<dbReference type="InterPro" id="IPR001117">
    <property type="entry name" value="Cu-oxidase_2nd"/>
</dbReference>
<dbReference type="InterPro" id="IPR011706">
    <property type="entry name" value="Cu-oxidase_C"/>
</dbReference>
<dbReference type="InterPro" id="IPR045087">
    <property type="entry name" value="Cu-oxidase_fam"/>
</dbReference>
<dbReference type="InterPro" id="IPR033138">
    <property type="entry name" value="Cu_oxidase_CS"/>
</dbReference>
<dbReference type="InterPro" id="IPR002355">
    <property type="entry name" value="Cu_oxidase_Cu_BS"/>
</dbReference>
<dbReference type="InterPro" id="IPR008972">
    <property type="entry name" value="Cupredoxin"/>
</dbReference>
<dbReference type="InterPro" id="IPR034288">
    <property type="entry name" value="CuRO_1_LCC"/>
</dbReference>
<dbReference type="InterPro" id="IPR034285">
    <property type="entry name" value="CuRO_2_LCC"/>
</dbReference>
<dbReference type="InterPro" id="IPR034289">
    <property type="entry name" value="CuRO_3_LCC"/>
</dbReference>
<dbReference type="InterPro" id="IPR017761">
    <property type="entry name" value="Laccase"/>
</dbReference>
<dbReference type="NCBIfam" id="TIGR03389">
    <property type="entry name" value="laccase"/>
    <property type="match status" value="1"/>
</dbReference>
<dbReference type="PANTHER" id="PTHR11709:SF417">
    <property type="entry name" value="LACCASE-17"/>
    <property type="match status" value="1"/>
</dbReference>
<dbReference type="PANTHER" id="PTHR11709">
    <property type="entry name" value="MULTI-COPPER OXIDASE"/>
    <property type="match status" value="1"/>
</dbReference>
<dbReference type="Pfam" id="PF00394">
    <property type="entry name" value="Cu-oxidase"/>
    <property type="match status" value="1"/>
</dbReference>
<dbReference type="Pfam" id="PF07731">
    <property type="entry name" value="Cu-oxidase_2"/>
    <property type="match status" value="1"/>
</dbReference>
<dbReference type="Pfam" id="PF07732">
    <property type="entry name" value="Cu-oxidase_3"/>
    <property type="match status" value="1"/>
</dbReference>
<dbReference type="SUPFAM" id="SSF49503">
    <property type="entry name" value="Cupredoxins"/>
    <property type="match status" value="3"/>
</dbReference>
<dbReference type="PROSITE" id="PS00079">
    <property type="entry name" value="MULTICOPPER_OXIDASE1"/>
    <property type="match status" value="1"/>
</dbReference>
<dbReference type="PROSITE" id="PS00080">
    <property type="entry name" value="MULTICOPPER_OXIDASE2"/>
    <property type="match status" value="1"/>
</dbReference>
<proteinExistence type="evidence at transcript level"/>
<evidence type="ECO:0000250" key="1"/>
<evidence type="ECO:0000255" key="2"/>
<evidence type="ECO:0000269" key="3">
    <source>
    </source>
</evidence>
<evidence type="ECO:0000269" key="4">
    <source>
    </source>
</evidence>
<evidence type="ECO:0000305" key="5"/>
<gene>
    <name type="primary">LAC17</name>
    <name type="ordered locus">At5g60020</name>
    <name type="ORF">MMN10.27</name>
</gene>
<reference key="1">
    <citation type="journal article" date="1998" name="DNA Res.">
        <title>Structural analysis of Arabidopsis thaliana chromosome 5. VII. Sequence features of the regions of 1,013,767 bp covered by sixteen physically assigned P1 and TAC clones.</title>
        <authorList>
            <person name="Nakamura Y."/>
            <person name="Sato S."/>
            <person name="Asamizu E."/>
            <person name="Kaneko T."/>
            <person name="Kotani H."/>
            <person name="Miyajima N."/>
            <person name="Tabata S."/>
        </authorList>
    </citation>
    <scope>NUCLEOTIDE SEQUENCE [LARGE SCALE GENOMIC DNA]</scope>
    <source>
        <strain>cv. Columbia</strain>
    </source>
</reference>
<reference key="2">
    <citation type="journal article" date="2017" name="Plant J.">
        <title>Araport11: a complete reannotation of the Arabidopsis thaliana reference genome.</title>
        <authorList>
            <person name="Cheng C.Y."/>
            <person name="Krishnakumar V."/>
            <person name="Chan A.P."/>
            <person name="Thibaud-Nissen F."/>
            <person name="Schobel S."/>
            <person name="Town C.D."/>
        </authorList>
    </citation>
    <scope>GENOME REANNOTATION</scope>
    <source>
        <strain>cv. Columbia</strain>
    </source>
</reference>
<reference key="3">
    <citation type="submission" date="2004-10" db="EMBL/GenBank/DDBJ databases">
        <title>Arabidopsis ORF clones.</title>
        <authorList>
            <person name="Cheuk R.F."/>
            <person name="Chen H."/>
            <person name="Kim C.J."/>
            <person name="Shinn P."/>
            <person name="Ecker J.R."/>
        </authorList>
    </citation>
    <scope>NUCLEOTIDE SEQUENCE [LARGE SCALE MRNA]</scope>
    <source>
        <strain>cv. Columbia</strain>
    </source>
</reference>
<reference key="4">
    <citation type="journal article" date="2005" name="Planta">
        <title>Gene structure and molecular analysis of the laccase-like multicopper oxidase (LMCO) gene family in Arabidopsis thaliana.</title>
        <authorList>
            <person name="McCaig B.C."/>
            <person name="Meagher R.B."/>
            <person name="Dean J.F.D."/>
        </authorList>
    </citation>
    <scope>TISSUE SPECIFICITY</scope>
</reference>
<reference key="5">
    <citation type="journal article" date="2006" name="J. Exp. Bot.">
        <title>Mutant identification and characterization of the laccase gene family in Arabidopsis.</title>
        <authorList>
            <person name="Cai X."/>
            <person name="Davis E.J."/>
            <person name="Ballif J."/>
            <person name="Liang M."/>
            <person name="Bushman E."/>
            <person name="Haroldsen V."/>
            <person name="Torabinejad J."/>
            <person name="Wu Y."/>
        </authorList>
    </citation>
    <scope>TISSUE SPECIFICITY</scope>
</reference>
<accession>Q9FJD5</accession>
<feature type="signal peptide" evidence="2">
    <location>
        <begin position="1"/>
        <end position="22"/>
    </location>
</feature>
<feature type="chain" id="PRO_0000283645" description="Laccase-17">
    <location>
        <begin position="23"/>
        <end position="577"/>
    </location>
</feature>
<feature type="domain" description="Plastocyanin-like 1">
    <location>
        <begin position="30"/>
        <end position="146"/>
    </location>
</feature>
<feature type="domain" description="Plastocyanin-like 2">
    <location>
        <begin position="156"/>
        <end position="309"/>
    </location>
</feature>
<feature type="domain" description="Plastocyanin-like 3">
    <location>
        <begin position="427"/>
        <end position="561"/>
    </location>
</feature>
<feature type="binding site" description="type 2 copper site" evidence="1">
    <location>
        <position position="80"/>
    </location>
    <ligand>
        <name>Cu cation</name>
        <dbReference type="ChEBI" id="CHEBI:23378"/>
        <label>1</label>
    </ligand>
</feature>
<feature type="binding site" description="type 3 copper site" evidence="1">
    <location>
        <position position="82"/>
    </location>
    <ligand>
        <name>Cu cation</name>
        <dbReference type="ChEBI" id="CHEBI:23378"/>
        <label>2</label>
    </ligand>
</feature>
<feature type="binding site" description="type 3 copper site" evidence="1">
    <location>
        <position position="125"/>
    </location>
    <ligand>
        <name>Cu cation</name>
        <dbReference type="ChEBI" id="CHEBI:23378"/>
        <label>2</label>
    </ligand>
</feature>
<feature type="binding site" description="type 3 copper site" evidence="1">
    <location>
        <position position="127"/>
    </location>
    <ligand>
        <name>Cu cation</name>
        <dbReference type="ChEBI" id="CHEBI:23378"/>
        <label>3</label>
    </ligand>
</feature>
<feature type="binding site" description="type 1 copper site" evidence="1">
    <location>
        <position position="478"/>
    </location>
    <ligand>
        <name>Cu cation</name>
        <dbReference type="ChEBI" id="CHEBI:23378"/>
        <label>4</label>
    </ligand>
</feature>
<feature type="binding site" description="type 2 copper site" evidence="1">
    <location>
        <position position="481"/>
    </location>
    <ligand>
        <name>Cu cation</name>
        <dbReference type="ChEBI" id="CHEBI:23378"/>
        <label>1</label>
    </ligand>
</feature>
<feature type="binding site" description="type 3 copper site" evidence="1">
    <location>
        <position position="483"/>
    </location>
    <ligand>
        <name>Cu cation</name>
        <dbReference type="ChEBI" id="CHEBI:23378"/>
        <label>3</label>
    </ligand>
</feature>
<feature type="binding site" description="type 3 copper site" evidence="1">
    <location>
        <position position="540"/>
    </location>
    <ligand>
        <name>Cu cation</name>
        <dbReference type="ChEBI" id="CHEBI:23378"/>
        <label>3</label>
    </ligand>
</feature>
<feature type="binding site" description="type 1 copper site" evidence="1">
    <location>
        <position position="541"/>
    </location>
    <ligand>
        <name>Cu cation</name>
        <dbReference type="ChEBI" id="CHEBI:23378"/>
        <label>4</label>
    </ligand>
</feature>
<feature type="binding site" description="type 3 copper site" evidence="1">
    <location>
        <position position="542"/>
    </location>
    <ligand>
        <name>Cu cation</name>
        <dbReference type="ChEBI" id="CHEBI:23378"/>
        <label>2</label>
    </ligand>
</feature>
<feature type="binding site" description="type 1 copper site" evidence="1">
    <location>
        <position position="546"/>
    </location>
    <ligand>
        <name>Cu cation</name>
        <dbReference type="ChEBI" id="CHEBI:23378"/>
        <label>4</label>
    </ligand>
</feature>
<feature type="glycosylation site" description="N-linked (GlcNAc...) asparagine" evidence="2">
    <location>
        <position position="35"/>
    </location>
</feature>
<feature type="glycosylation site" description="N-linked (GlcNAc...) asparagine" evidence="2">
    <location>
        <position position="76"/>
    </location>
</feature>
<feature type="glycosylation site" description="N-linked (GlcNAc...) asparagine" evidence="2">
    <location>
        <position position="112"/>
    </location>
</feature>
<feature type="glycosylation site" description="N-linked (GlcNAc...) asparagine" evidence="2">
    <location>
        <position position="185"/>
    </location>
</feature>
<feature type="glycosylation site" description="N-linked (GlcNAc...) asparagine" evidence="2">
    <location>
        <position position="201"/>
    </location>
</feature>
<feature type="glycosylation site" description="N-linked (GlcNAc...) asparagine" evidence="2">
    <location>
        <position position="237"/>
    </location>
</feature>
<feature type="glycosylation site" description="N-linked (GlcNAc...) asparagine" evidence="2">
    <location>
        <position position="297"/>
    </location>
</feature>
<feature type="glycosylation site" description="N-linked (GlcNAc...) asparagine" evidence="2">
    <location>
        <position position="335"/>
    </location>
</feature>
<feature type="glycosylation site" description="N-linked (GlcNAc...) asparagine" evidence="2">
    <location>
        <position position="383"/>
    </location>
</feature>
<feature type="glycosylation site" description="N-linked (GlcNAc...) asparagine" evidence="2">
    <location>
        <position position="391"/>
    </location>
</feature>
<feature type="glycosylation site" description="N-linked (GlcNAc...) asparagine" evidence="2">
    <location>
        <position position="401"/>
    </location>
</feature>
<feature type="glycosylation site" description="N-linked (GlcNAc...) asparagine" evidence="2">
    <location>
        <position position="437"/>
    </location>
</feature>
<feature type="glycosylation site" description="N-linked (GlcNAc...) asparagine" evidence="2">
    <location>
        <position position="444"/>
    </location>
</feature>
<feature type="glycosylation site" description="N-linked (GlcNAc...) asparagine" evidence="2">
    <location>
        <position position="450"/>
    </location>
</feature>
<feature type="glycosylation site" description="N-linked (GlcNAc...) asparagine" evidence="2">
    <location>
        <position position="460"/>
    </location>
</feature>
<protein>
    <recommendedName>
        <fullName>Laccase-17</fullName>
        <ecNumber>1.10.3.2</ecNumber>
    </recommendedName>
    <alternativeName>
        <fullName>Benzenediol:oxygen oxidoreductase 17</fullName>
    </alternativeName>
    <alternativeName>
        <fullName>Diphenol oxidase 17</fullName>
    </alternativeName>
    <alternativeName>
        <fullName>Urishiol oxidase 17</fullName>
    </alternativeName>
</protein>
<organism>
    <name type="scientific">Arabidopsis thaliana</name>
    <name type="common">Mouse-ear cress</name>
    <dbReference type="NCBI Taxonomy" id="3702"/>
    <lineage>
        <taxon>Eukaryota</taxon>
        <taxon>Viridiplantae</taxon>
        <taxon>Streptophyta</taxon>
        <taxon>Embryophyta</taxon>
        <taxon>Tracheophyta</taxon>
        <taxon>Spermatophyta</taxon>
        <taxon>Magnoliopsida</taxon>
        <taxon>eudicotyledons</taxon>
        <taxon>Gunneridae</taxon>
        <taxon>Pentapetalae</taxon>
        <taxon>rosids</taxon>
        <taxon>malvids</taxon>
        <taxon>Brassicales</taxon>
        <taxon>Brassicaceae</taxon>
        <taxon>Camelineae</taxon>
        <taxon>Arabidopsis</taxon>
    </lineage>
</organism>
<name>LAC17_ARATH</name>
<sequence>MALQLLLAVFSCVLLLPQPAFGITRHYTLEIKMQNVTRLCHTKSLVSVNGQFPGPKLIAREGDQVLIKVVNQVPNNISLHWHGIRQLRSGWADGPAYITQCPIQTGQSYVYNYTIVGQRGTLWYHAHISWLRSTVYGPLIILPKRGVPYPFAKPHKEVPMIFGEWFNADTEAIIRQATQTGGGPNVSDAYTINGLPGPLYNCSAKDTFRLRVKPGKTYLLRLINAALNDELFFSIANHTVTVVEADAIYVKPFETETILIAPGQTTNVLLKTKSSYPSASFFMTARPYVTGQGTFDNSTVAGILEYEPPKQTKGAHSRTSIKNLQLFKPILPALNDTNFATKFSNKLRSLNSKNFPANVPLNVDRKFFFTVGLGTNPCNHKNNQTCQGPTNTTMFAASISNISFTMPTKALLQSHYSGQSHGVYSPKFPWSPIVPFNYTGTPPNNTMVSNGTNLMVLPYNTSVELVMQDTSILGAESHPLHLHGFNFFVVGQGFGNFDPNKDPRNFNLVDPIERNTVGVPSGGWAAIRFLADNPGVWFMHCHLEVHTSWGLRMAWLVLDGDKPDQKLLPPPADLPKC</sequence>